<name>IPYR_RHORT</name>
<proteinExistence type="inferred from homology"/>
<sequence>MDIKKIPVGKNPPQDVNVIIEIPLLADPVKYEVDKESGAMFVDRFLHTAMHYPCNYGFVPHTLSDDGDPVDVMVVGRIPVAVGSVMRTRPVGVLYMEDEAGRDEKILGVPHSKLYPYHDNVNNFGDLRPIELRRIEHFFAHYKDLEEGKWVKILGWGNYKEAWDVIERGIAAEAAHKKV</sequence>
<organism>
    <name type="scientific">Rhodospirillum rubrum (strain ATCC 11170 / ATH 1.1.1 / DSM 467 / LMG 4362 / NCIMB 8255 / S1)</name>
    <dbReference type="NCBI Taxonomy" id="269796"/>
    <lineage>
        <taxon>Bacteria</taxon>
        <taxon>Pseudomonadati</taxon>
        <taxon>Pseudomonadota</taxon>
        <taxon>Alphaproteobacteria</taxon>
        <taxon>Rhodospirillales</taxon>
        <taxon>Rhodospirillaceae</taxon>
        <taxon>Rhodospirillum</taxon>
    </lineage>
</organism>
<evidence type="ECO:0000255" key="1">
    <source>
        <dbReference type="HAMAP-Rule" id="MF_00209"/>
    </source>
</evidence>
<reference key="1">
    <citation type="submission" date="1998-12" db="EMBL/GenBank/DDBJ databases">
        <title>Cloning and sequencing of cytoplasmic pyrophosphatase from Rhodospirillum rubrum.</title>
        <authorList>
            <person name="Romero I."/>
            <person name="Celis H."/>
        </authorList>
    </citation>
    <scope>NUCLEOTIDE SEQUENCE [GENOMIC DNA]</scope>
</reference>
<reference key="2">
    <citation type="journal article" date="2011" name="Stand. Genomic Sci.">
        <title>Complete genome sequence of Rhodospirillum rubrum type strain (S1).</title>
        <authorList>
            <person name="Munk A.C."/>
            <person name="Copeland A."/>
            <person name="Lucas S."/>
            <person name="Lapidus A."/>
            <person name="Del Rio T.G."/>
            <person name="Barry K."/>
            <person name="Detter J.C."/>
            <person name="Hammon N."/>
            <person name="Israni S."/>
            <person name="Pitluck S."/>
            <person name="Brettin T."/>
            <person name="Bruce D."/>
            <person name="Han C."/>
            <person name="Tapia R."/>
            <person name="Gilna P."/>
            <person name="Schmutz J."/>
            <person name="Larimer F."/>
            <person name="Land M."/>
            <person name="Kyrpides N.C."/>
            <person name="Mavromatis K."/>
            <person name="Richardson P."/>
            <person name="Rohde M."/>
            <person name="Goeker M."/>
            <person name="Klenk H.P."/>
            <person name="Zhang Y."/>
            <person name="Roberts G.P."/>
            <person name="Reslewic S."/>
            <person name="Schwartz D.C."/>
        </authorList>
    </citation>
    <scope>NUCLEOTIDE SEQUENCE [LARGE SCALE GENOMIC DNA]</scope>
    <source>
        <strain>ATCC 11170 / ATH 1.1.1 / DSM 467 / LMG 4362 / NCIMB 8255 / S1</strain>
    </source>
</reference>
<protein>
    <recommendedName>
        <fullName evidence="1">Inorganic pyrophosphatase</fullName>
        <ecNumber evidence="1">3.6.1.1</ecNumber>
    </recommendedName>
    <alternativeName>
        <fullName evidence="1">Pyrophosphate phospho-hydrolase</fullName>
        <shortName evidence="1">PPase</shortName>
    </alternativeName>
</protein>
<dbReference type="EC" id="3.6.1.1" evidence="1"/>
<dbReference type="EMBL" id="AF115341">
    <property type="protein sequence ID" value="AAF21981.1"/>
    <property type="molecule type" value="Genomic_DNA"/>
</dbReference>
<dbReference type="EMBL" id="CP000230">
    <property type="protein sequence ID" value="ABC20951.1"/>
    <property type="molecule type" value="Genomic_DNA"/>
</dbReference>
<dbReference type="RefSeq" id="WP_011387907.1">
    <property type="nucleotide sequence ID" value="NC_007643.1"/>
</dbReference>
<dbReference type="RefSeq" id="YP_425238.1">
    <property type="nucleotide sequence ID" value="NC_007643.1"/>
</dbReference>
<dbReference type="SMR" id="Q9RGQ1"/>
<dbReference type="STRING" id="269796.Rru_A0146"/>
<dbReference type="EnsemblBacteria" id="ABC20951">
    <property type="protein sequence ID" value="ABC20951"/>
    <property type="gene ID" value="Rru_A0146"/>
</dbReference>
<dbReference type="KEGG" id="rru:Rru_A0146"/>
<dbReference type="PATRIC" id="fig|269796.9.peg.201"/>
<dbReference type="eggNOG" id="COG0221">
    <property type="taxonomic scope" value="Bacteria"/>
</dbReference>
<dbReference type="HOGENOM" id="CLU_073198_1_0_5"/>
<dbReference type="PhylomeDB" id="Q9RGQ1"/>
<dbReference type="SABIO-RK" id="Q9RGQ1"/>
<dbReference type="Proteomes" id="UP000001929">
    <property type="component" value="Chromosome"/>
</dbReference>
<dbReference type="GO" id="GO:0005737">
    <property type="term" value="C:cytoplasm"/>
    <property type="evidence" value="ECO:0007669"/>
    <property type="project" value="UniProtKB-SubCell"/>
</dbReference>
<dbReference type="GO" id="GO:0004427">
    <property type="term" value="F:inorganic diphosphate phosphatase activity"/>
    <property type="evidence" value="ECO:0007669"/>
    <property type="project" value="UniProtKB-UniRule"/>
</dbReference>
<dbReference type="GO" id="GO:0000287">
    <property type="term" value="F:magnesium ion binding"/>
    <property type="evidence" value="ECO:0007669"/>
    <property type="project" value="UniProtKB-UniRule"/>
</dbReference>
<dbReference type="GO" id="GO:0006796">
    <property type="term" value="P:phosphate-containing compound metabolic process"/>
    <property type="evidence" value="ECO:0007669"/>
    <property type="project" value="InterPro"/>
</dbReference>
<dbReference type="CDD" id="cd00412">
    <property type="entry name" value="pyrophosphatase"/>
    <property type="match status" value="1"/>
</dbReference>
<dbReference type="Gene3D" id="3.90.80.10">
    <property type="entry name" value="Inorganic pyrophosphatase"/>
    <property type="match status" value="1"/>
</dbReference>
<dbReference type="HAMAP" id="MF_00209">
    <property type="entry name" value="Inorganic_PPase"/>
    <property type="match status" value="1"/>
</dbReference>
<dbReference type="InterPro" id="IPR008162">
    <property type="entry name" value="Pyrophosphatase"/>
</dbReference>
<dbReference type="InterPro" id="IPR036649">
    <property type="entry name" value="Pyrophosphatase_sf"/>
</dbReference>
<dbReference type="NCBIfam" id="NF002317">
    <property type="entry name" value="PRK01250.1"/>
    <property type="match status" value="1"/>
</dbReference>
<dbReference type="PANTHER" id="PTHR10286">
    <property type="entry name" value="INORGANIC PYROPHOSPHATASE"/>
    <property type="match status" value="1"/>
</dbReference>
<dbReference type="Pfam" id="PF00719">
    <property type="entry name" value="Pyrophosphatase"/>
    <property type="match status" value="1"/>
</dbReference>
<dbReference type="SUPFAM" id="SSF50324">
    <property type="entry name" value="Inorganic pyrophosphatase"/>
    <property type="match status" value="1"/>
</dbReference>
<dbReference type="PROSITE" id="PS00387">
    <property type="entry name" value="PPASE"/>
    <property type="match status" value="1"/>
</dbReference>
<keyword id="KW-0963">Cytoplasm</keyword>
<keyword id="KW-0378">Hydrolase</keyword>
<keyword id="KW-0460">Magnesium</keyword>
<keyword id="KW-0479">Metal-binding</keyword>
<keyword id="KW-1185">Reference proteome</keyword>
<feature type="chain" id="PRO_0000137526" description="Inorganic pyrophosphatase">
    <location>
        <begin position="1"/>
        <end position="179"/>
    </location>
</feature>
<feature type="binding site" evidence="1">
    <location>
        <position position="30"/>
    </location>
    <ligand>
        <name>substrate</name>
    </ligand>
</feature>
<feature type="binding site" evidence="1">
    <location>
        <position position="44"/>
    </location>
    <ligand>
        <name>substrate</name>
    </ligand>
</feature>
<feature type="binding site" evidence="1">
    <location>
        <position position="56"/>
    </location>
    <ligand>
        <name>substrate</name>
    </ligand>
</feature>
<feature type="binding site" evidence="1">
    <location>
        <position position="66"/>
    </location>
    <ligand>
        <name>Mg(2+)</name>
        <dbReference type="ChEBI" id="CHEBI:18420"/>
        <label>1</label>
    </ligand>
</feature>
<feature type="binding site" evidence="1">
    <location>
        <position position="71"/>
    </location>
    <ligand>
        <name>Mg(2+)</name>
        <dbReference type="ChEBI" id="CHEBI:18420"/>
        <label>1</label>
    </ligand>
</feature>
<feature type="binding site" evidence="1">
    <location>
        <position position="71"/>
    </location>
    <ligand>
        <name>Mg(2+)</name>
        <dbReference type="ChEBI" id="CHEBI:18420"/>
        <label>2</label>
    </ligand>
</feature>
<feature type="binding site" evidence="1">
    <location>
        <position position="103"/>
    </location>
    <ligand>
        <name>Mg(2+)</name>
        <dbReference type="ChEBI" id="CHEBI:18420"/>
        <label>1</label>
    </ligand>
</feature>
<feature type="binding site" evidence="1">
    <location>
        <position position="142"/>
    </location>
    <ligand>
        <name>substrate</name>
    </ligand>
</feature>
<accession>Q9RGQ1</accession>
<accession>Q2RY44</accession>
<gene>
    <name evidence="1" type="primary">ppa</name>
    <name type="ordered locus">Rru_A0146</name>
</gene>
<comment type="function">
    <text evidence="1">Catalyzes the hydrolysis of inorganic pyrophosphate (PPi) forming two phosphate ions.</text>
</comment>
<comment type="catalytic activity">
    <reaction evidence="1">
        <text>diphosphate + H2O = 2 phosphate + H(+)</text>
        <dbReference type="Rhea" id="RHEA:24576"/>
        <dbReference type="ChEBI" id="CHEBI:15377"/>
        <dbReference type="ChEBI" id="CHEBI:15378"/>
        <dbReference type="ChEBI" id="CHEBI:33019"/>
        <dbReference type="ChEBI" id="CHEBI:43474"/>
        <dbReference type="EC" id="3.6.1.1"/>
    </reaction>
</comment>
<comment type="cofactor">
    <cofactor evidence="1">
        <name>Mg(2+)</name>
        <dbReference type="ChEBI" id="CHEBI:18420"/>
    </cofactor>
</comment>
<comment type="subunit">
    <text evidence="1">Homohexamer.</text>
</comment>
<comment type="subcellular location">
    <subcellularLocation>
        <location evidence="1">Cytoplasm</location>
    </subcellularLocation>
</comment>
<comment type="similarity">
    <text evidence="1">Belongs to the PPase family.</text>
</comment>